<sequence>MGFSGHHARKRFGQHWLLDESVLQRIIEAADLQSTDRVLEVGPGRGALTERLLAAGLKAVHAIELDRDLVQGLRDRFVVQPGFSLHQGDVLEAPLELSDGRIADKVVANIPYNITGPLLERLVGRLDRPVDPPYQRLVLLVQKEVAERIRARPGHSSFSALSVRMQLLARCHSVCPVPPRCFQPPPKVQSEVICLEPLPASERVMPDLAARVESLLKQAFLARRKMLRNTLAGVAEPNRLKDLAASAGFSLQQRPQELAPATWVALARGLNRGD</sequence>
<accession>Q3AKE0</accession>
<dbReference type="EC" id="2.1.1.182" evidence="1"/>
<dbReference type="EMBL" id="CP000110">
    <property type="protein sequence ID" value="ABB34942.1"/>
    <property type="molecule type" value="Genomic_DNA"/>
</dbReference>
<dbReference type="RefSeq" id="WP_011364163.1">
    <property type="nucleotide sequence ID" value="NC_007516.1"/>
</dbReference>
<dbReference type="SMR" id="Q3AKE0"/>
<dbReference type="STRING" id="110662.Syncc9605_1187"/>
<dbReference type="KEGG" id="syd:Syncc9605_1187"/>
<dbReference type="eggNOG" id="COG0030">
    <property type="taxonomic scope" value="Bacteria"/>
</dbReference>
<dbReference type="HOGENOM" id="CLU_041220_0_1_3"/>
<dbReference type="OrthoDB" id="9814755at2"/>
<dbReference type="GO" id="GO:0005829">
    <property type="term" value="C:cytosol"/>
    <property type="evidence" value="ECO:0007669"/>
    <property type="project" value="TreeGrafter"/>
</dbReference>
<dbReference type="GO" id="GO:0052908">
    <property type="term" value="F:16S rRNA (adenine(1518)-N(6)/adenine(1519)-N(6))-dimethyltransferase activity"/>
    <property type="evidence" value="ECO:0007669"/>
    <property type="project" value="UniProtKB-EC"/>
</dbReference>
<dbReference type="GO" id="GO:0003723">
    <property type="term" value="F:RNA binding"/>
    <property type="evidence" value="ECO:0007669"/>
    <property type="project" value="UniProtKB-KW"/>
</dbReference>
<dbReference type="CDD" id="cd02440">
    <property type="entry name" value="AdoMet_MTases"/>
    <property type="match status" value="1"/>
</dbReference>
<dbReference type="Gene3D" id="1.10.8.100">
    <property type="entry name" value="Ribosomal RNA adenine dimethylase-like, domain 2"/>
    <property type="match status" value="1"/>
</dbReference>
<dbReference type="Gene3D" id="3.40.50.150">
    <property type="entry name" value="Vaccinia Virus protein VP39"/>
    <property type="match status" value="1"/>
</dbReference>
<dbReference type="HAMAP" id="MF_00607">
    <property type="entry name" value="16SrRNA_methyltr_A"/>
    <property type="match status" value="1"/>
</dbReference>
<dbReference type="InterPro" id="IPR001737">
    <property type="entry name" value="KsgA/Erm"/>
</dbReference>
<dbReference type="InterPro" id="IPR023165">
    <property type="entry name" value="rRNA_Ade_diMease-like_C"/>
</dbReference>
<dbReference type="InterPro" id="IPR020596">
    <property type="entry name" value="rRNA_Ade_Mease_Trfase_CS"/>
</dbReference>
<dbReference type="InterPro" id="IPR020598">
    <property type="entry name" value="rRNA_Ade_methylase_Trfase_N"/>
</dbReference>
<dbReference type="InterPro" id="IPR011530">
    <property type="entry name" value="rRNA_adenine_dimethylase"/>
</dbReference>
<dbReference type="InterPro" id="IPR029063">
    <property type="entry name" value="SAM-dependent_MTases_sf"/>
</dbReference>
<dbReference type="NCBIfam" id="TIGR00755">
    <property type="entry name" value="ksgA"/>
    <property type="match status" value="1"/>
</dbReference>
<dbReference type="PANTHER" id="PTHR11727">
    <property type="entry name" value="DIMETHYLADENOSINE TRANSFERASE"/>
    <property type="match status" value="1"/>
</dbReference>
<dbReference type="PANTHER" id="PTHR11727:SF7">
    <property type="entry name" value="DIMETHYLADENOSINE TRANSFERASE-RELATED"/>
    <property type="match status" value="1"/>
</dbReference>
<dbReference type="Pfam" id="PF00398">
    <property type="entry name" value="RrnaAD"/>
    <property type="match status" value="1"/>
</dbReference>
<dbReference type="SMART" id="SM00650">
    <property type="entry name" value="rADc"/>
    <property type="match status" value="1"/>
</dbReference>
<dbReference type="SUPFAM" id="SSF53335">
    <property type="entry name" value="S-adenosyl-L-methionine-dependent methyltransferases"/>
    <property type="match status" value="1"/>
</dbReference>
<dbReference type="PROSITE" id="PS01131">
    <property type="entry name" value="RRNA_A_DIMETH"/>
    <property type="match status" value="1"/>
</dbReference>
<dbReference type="PROSITE" id="PS51689">
    <property type="entry name" value="SAM_RNA_A_N6_MT"/>
    <property type="match status" value="1"/>
</dbReference>
<reference key="1">
    <citation type="submission" date="2005-07" db="EMBL/GenBank/DDBJ databases">
        <title>Complete sequence of Synechococcus sp. CC9605.</title>
        <authorList>
            <consortium name="US DOE Joint Genome Institute"/>
            <person name="Copeland A."/>
            <person name="Lucas S."/>
            <person name="Lapidus A."/>
            <person name="Barry K."/>
            <person name="Detter J.C."/>
            <person name="Glavina T."/>
            <person name="Hammon N."/>
            <person name="Israni S."/>
            <person name="Pitluck S."/>
            <person name="Schmutz J."/>
            <person name="Martinez M."/>
            <person name="Larimer F."/>
            <person name="Land M."/>
            <person name="Kyrpides N."/>
            <person name="Ivanova N."/>
            <person name="Richardson P."/>
        </authorList>
    </citation>
    <scope>NUCLEOTIDE SEQUENCE [LARGE SCALE GENOMIC DNA]</scope>
    <source>
        <strain>CC9605</strain>
    </source>
</reference>
<gene>
    <name evidence="1" type="primary">rsmA</name>
    <name evidence="1" type="synonym">ksgA</name>
    <name type="ordered locus">Syncc9605_1187</name>
</gene>
<feature type="chain" id="PRO_0000257367" description="Ribosomal RNA small subunit methyltransferase A">
    <location>
        <begin position="1"/>
        <end position="274"/>
    </location>
</feature>
<feature type="binding site" evidence="1">
    <location>
        <position position="15"/>
    </location>
    <ligand>
        <name>S-adenosyl-L-methionine</name>
        <dbReference type="ChEBI" id="CHEBI:59789"/>
    </ligand>
</feature>
<feature type="binding site" evidence="1">
    <location>
        <position position="17"/>
    </location>
    <ligand>
        <name>S-adenosyl-L-methionine</name>
        <dbReference type="ChEBI" id="CHEBI:59789"/>
    </ligand>
</feature>
<feature type="binding site" evidence="1">
    <location>
        <position position="42"/>
    </location>
    <ligand>
        <name>S-adenosyl-L-methionine</name>
        <dbReference type="ChEBI" id="CHEBI:59789"/>
    </ligand>
</feature>
<feature type="binding site" evidence="1">
    <location>
        <position position="64"/>
    </location>
    <ligand>
        <name>S-adenosyl-L-methionine</name>
        <dbReference type="ChEBI" id="CHEBI:59789"/>
    </ligand>
</feature>
<feature type="binding site" evidence="1">
    <location>
        <position position="89"/>
    </location>
    <ligand>
        <name>S-adenosyl-L-methionine</name>
        <dbReference type="ChEBI" id="CHEBI:59789"/>
    </ligand>
</feature>
<feature type="binding site" evidence="1">
    <location>
        <position position="109"/>
    </location>
    <ligand>
        <name>S-adenosyl-L-methionine</name>
        <dbReference type="ChEBI" id="CHEBI:59789"/>
    </ligand>
</feature>
<comment type="function">
    <text evidence="1">Specifically dimethylates two adjacent adenosines (A1518 and A1519) in the loop of a conserved hairpin near the 3'-end of 16S rRNA in the 30S particle. May play a critical role in biogenesis of 30S subunits.</text>
</comment>
<comment type="catalytic activity">
    <reaction evidence="1">
        <text>adenosine(1518)/adenosine(1519) in 16S rRNA + 4 S-adenosyl-L-methionine = N(6)-dimethyladenosine(1518)/N(6)-dimethyladenosine(1519) in 16S rRNA + 4 S-adenosyl-L-homocysteine + 4 H(+)</text>
        <dbReference type="Rhea" id="RHEA:19609"/>
        <dbReference type="Rhea" id="RHEA-COMP:10232"/>
        <dbReference type="Rhea" id="RHEA-COMP:10233"/>
        <dbReference type="ChEBI" id="CHEBI:15378"/>
        <dbReference type="ChEBI" id="CHEBI:57856"/>
        <dbReference type="ChEBI" id="CHEBI:59789"/>
        <dbReference type="ChEBI" id="CHEBI:74411"/>
        <dbReference type="ChEBI" id="CHEBI:74493"/>
        <dbReference type="EC" id="2.1.1.182"/>
    </reaction>
</comment>
<comment type="subcellular location">
    <subcellularLocation>
        <location evidence="1">Cytoplasm</location>
    </subcellularLocation>
</comment>
<comment type="similarity">
    <text evidence="1">Belongs to the class I-like SAM-binding methyltransferase superfamily. rRNA adenine N(6)-methyltransferase family. RsmA subfamily.</text>
</comment>
<organism>
    <name type="scientific">Synechococcus sp. (strain CC9605)</name>
    <dbReference type="NCBI Taxonomy" id="110662"/>
    <lineage>
        <taxon>Bacteria</taxon>
        <taxon>Bacillati</taxon>
        <taxon>Cyanobacteriota</taxon>
        <taxon>Cyanophyceae</taxon>
        <taxon>Synechococcales</taxon>
        <taxon>Synechococcaceae</taxon>
        <taxon>Synechococcus</taxon>
    </lineage>
</organism>
<keyword id="KW-0963">Cytoplasm</keyword>
<keyword id="KW-0489">Methyltransferase</keyword>
<keyword id="KW-0694">RNA-binding</keyword>
<keyword id="KW-0698">rRNA processing</keyword>
<keyword id="KW-0949">S-adenosyl-L-methionine</keyword>
<keyword id="KW-0808">Transferase</keyword>
<proteinExistence type="inferred from homology"/>
<name>RSMA_SYNSC</name>
<protein>
    <recommendedName>
        <fullName evidence="1">Ribosomal RNA small subunit methyltransferase A</fullName>
        <ecNumber evidence="1">2.1.1.182</ecNumber>
    </recommendedName>
    <alternativeName>
        <fullName evidence="1">16S rRNA (adenine(1518)-N(6)/adenine(1519)-N(6))-dimethyltransferase</fullName>
    </alternativeName>
    <alternativeName>
        <fullName evidence="1">16S rRNA dimethyladenosine transferase</fullName>
    </alternativeName>
    <alternativeName>
        <fullName evidence="1">16S rRNA dimethylase</fullName>
    </alternativeName>
    <alternativeName>
        <fullName evidence="1">S-adenosylmethionine-6-N', N'-adenosyl(rRNA) dimethyltransferase</fullName>
    </alternativeName>
</protein>
<evidence type="ECO:0000255" key="1">
    <source>
        <dbReference type="HAMAP-Rule" id="MF_00607"/>
    </source>
</evidence>